<comment type="similarity">
    <text evidence="2">Belongs to the UPF0758 family.</text>
</comment>
<evidence type="ECO:0000255" key="1">
    <source>
        <dbReference type="PROSITE-ProRule" id="PRU01182"/>
    </source>
</evidence>
<evidence type="ECO:0000305" key="2"/>
<name>Y4721_BACAC</name>
<protein>
    <recommendedName>
        <fullName>UPF0758 protein BAMEG_4721</fullName>
    </recommendedName>
</protein>
<accession>C3L6Y5</accession>
<sequence length="225" mass="25632">MNGIRDVVKEEQPRERLLLEGAGSLSNRELLAVLLRTGSKEESVLKLSDKILHHFDGLRMLKDATLEELVSIHGVGVAKATQLIAAFELGRRMVRLEYQNRYSIRSPEDCATYMMEEMRFLQQEHFVCLYLNTKNQVIHRQTIFIGSLNSSIVHPREVFKEAFRRAAASIICLHNHPSGDPAPSREDIEVTKRLVECGRIIGIEVLDHIIIGDHKFVSLKEKGHI</sequence>
<gene>
    <name type="ordered locus">BAMEG_4721</name>
</gene>
<keyword id="KW-0378">Hydrolase</keyword>
<keyword id="KW-0479">Metal-binding</keyword>
<keyword id="KW-0482">Metalloprotease</keyword>
<keyword id="KW-0645">Protease</keyword>
<keyword id="KW-0862">Zinc</keyword>
<dbReference type="EMBL" id="CP001215">
    <property type="protein sequence ID" value="ACP13173.1"/>
    <property type="molecule type" value="Genomic_DNA"/>
</dbReference>
<dbReference type="SMR" id="C3L6Y5"/>
<dbReference type="KEGG" id="bah:BAMEG_4721"/>
<dbReference type="HOGENOM" id="CLU_073529_0_2_9"/>
<dbReference type="GO" id="GO:0046872">
    <property type="term" value="F:metal ion binding"/>
    <property type="evidence" value="ECO:0007669"/>
    <property type="project" value="UniProtKB-KW"/>
</dbReference>
<dbReference type="GO" id="GO:0008237">
    <property type="term" value="F:metallopeptidase activity"/>
    <property type="evidence" value="ECO:0007669"/>
    <property type="project" value="UniProtKB-KW"/>
</dbReference>
<dbReference type="GO" id="GO:0006508">
    <property type="term" value="P:proteolysis"/>
    <property type="evidence" value="ECO:0007669"/>
    <property type="project" value="UniProtKB-KW"/>
</dbReference>
<dbReference type="CDD" id="cd08071">
    <property type="entry name" value="MPN_DUF2466"/>
    <property type="match status" value="1"/>
</dbReference>
<dbReference type="Gene3D" id="3.40.140.10">
    <property type="entry name" value="Cytidine Deaminase, domain 2"/>
    <property type="match status" value="1"/>
</dbReference>
<dbReference type="InterPro" id="IPR037518">
    <property type="entry name" value="MPN"/>
</dbReference>
<dbReference type="InterPro" id="IPR025657">
    <property type="entry name" value="RadC_JAB"/>
</dbReference>
<dbReference type="InterPro" id="IPR010994">
    <property type="entry name" value="RuvA_2-like"/>
</dbReference>
<dbReference type="InterPro" id="IPR001405">
    <property type="entry name" value="UPF0758"/>
</dbReference>
<dbReference type="InterPro" id="IPR020891">
    <property type="entry name" value="UPF0758_CS"/>
</dbReference>
<dbReference type="InterPro" id="IPR046778">
    <property type="entry name" value="UPF0758_N"/>
</dbReference>
<dbReference type="NCBIfam" id="NF000642">
    <property type="entry name" value="PRK00024.1"/>
    <property type="match status" value="1"/>
</dbReference>
<dbReference type="NCBIfam" id="TIGR00608">
    <property type="entry name" value="radc"/>
    <property type="match status" value="1"/>
</dbReference>
<dbReference type="PANTHER" id="PTHR30471">
    <property type="entry name" value="DNA REPAIR PROTEIN RADC"/>
    <property type="match status" value="1"/>
</dbReference>
<dbReference type="PANTHER" id="PTHR30471:SF3">
    <property type="entry name" value="UPF0758 PROTEIN YEES-RELATED"/>
    <property type="match status" value="1"/>
</dbReference>
<dbReference type="Pfam" id="PF04002">
    <property type="entry name" value="RadC"/>
    <property type="match status" value="1"/>
</dbReference>
<dbReference type="Pfam" id="PF20582">
    <property type="entry name" value="UPF0758_N"/>
    <property type="match status" value="1"/>
</dbReference>
<dbReference type="SUPFAM" id="SSF102712">
    <property type="entry name" value="JAB1/MPN domain"/>
    <property type="match status" value="1"/>
</dbReference>
<dbReference type="SUPFAM" id="SSF47781">
    <property type="entry name" value="RuvA domain 2-like"/>
    <property type="match status" value="1"/>
</dbReference>
<dbReference type="PROSITE" id="PS50249">
    <property type="entry name" value="MPN"/>
    <property type="match status" value="1"/>
</dbReference>
<dbReference type="PROSITE" id="PS01302">
    <property type="entry name" value="UPF0758"/>
    <property type="match status" value="1"/>
</dbReference>
<proteinExistence type="inferred from homology"/>
<organism>
    <name type="scientific">Bacillus anthracis (strain CDC 684 / NRRL 3495)</name>
    <dbReference type="NCBI Taxonomy" id="568206"/>
    <lineage>
        <taxon>Bacteria</taxon>
        <taxon>Bacillati</taxon>
        <taxon>Bacillota</taxon>
        <taxon>Bacilli</taxon>
        <taxon>Bacillales</taxon>
        <taxon>Bacillaceae</taxon>
        <taxon>Bacillus</taxon>
        <taxon>Bacillus cereus group</taxon>
    </lineage>
</organism>
<reference key="1">
    <citation type="submission" date="2008-10" db="EMBL/GenBank/DDBJ databases">
        <title>Genome sequence of Bacillus anthracis str. CDC 684.</title>
        <authorList>
            <person name="Dodson R.J."/>
            <person name="Munk A.C."/>
            <person name="Brettin T."/>
            <person name="Bruce D."/>
            <person name="Detter C."/>
            <person name="Tapia R."/>
            <person name="Han C."/>
            <person name="Sutton G."/>
            <person name="Sims D."/>
        </authorList>
    </citation>
    <scope>NUCLEOTIDE SEQUENCE [LARGE SCALE GENOMIC DNA]</scope>
    <source>
        <strain>CDC 684 / NRRL 3495</strain>
    </source>
</reference>
<feature type="chain" id="PRO_1000195283" description="UPF0758 protein BAMEG_4721">
    <location>
        <begin position="1"/>
        <end position="225"/>
    </location>
</feature>
<feature type="domain" description="MPN" evidence="1">
    <location>
        <begin position="103"/>
        <end position="225"/>
    </location>
</feature>
<feature type="short sequence motif" description="JAMM motif" evidence="1">
    <location>
        <begin position="174"/>
        <end position="187"/>
    </location>
</feature>
<feature type="binding site" evidence="1">
    <location>
        <position position="174"/>
    </location>
    <ligand>
        <name>Zn(2+)</name>
        <dbReference type="ChEBI" id="CHEBI:29105"/>
        <note>catalytic</note>
    </ligand>
</feature>
<feature type="binding site" evidence="1">
    <location>
        <position position="176"/>
    </location>
    <ligand>
        <name>Zn(2+)</name>
        <dbReference type="ChEBI" id="CHEBI:29105"/>
        <note>catalytic</note>
    </ligand>
</feature>
<feature type="binding site" evidence="1">
    <location>
        <position position="187"/>
    </location>
    <ligand>
        <name>Zn(2+)</name>
        <dbReference type="ChEBI" id="CHEBI:29105"/>
        <note>catalytic</note>
    </ligand>
</feature>